<organism evidence="7">
    <name type="scientific">Caenorhabditis elegans</name>
    <dbReference type="NCBI Taxonomy" id="6239"/>
    <lineage>
        <taxon>Eukaryota</taxon>
        <taxon>Metazoa</taxon>
        <taxon>Ecdysozoa</taxon>
        <taxon>Nematoda</taxon>
        <taxon>Chromadorea</taxon>
        <taxon>Rhabditida</taxon>
        <taxon>Rhabditina</taxon>
        <taxon>Rhabditomorpha</taxon>
        <taxon>Rhabditoidea</taxon>
        <taxon>Rhabditidae</taxon>
        <taxon>Peloderinae</taxon>
        <taxon>Caenorhabditis</taxon>
    </lineage>
</organism>
<feature type="chain" id="PRO_0000438918" description="CCCH-type zinc finger protein moe-3" evidence="6">
    <location>
        <begin position="1"/>
        <end position="367"/>
    </location>
</feature>
<feature type="zinc finger region" description="C3H1-type 1" evidence="2">
    <location>
        <begin position="130"/>
        <end position="158"/>
    </location>
</feature>
<feature type="zinc finger region" description="C3H1-type 2" evidence="2">
    <location>
        <begin position="172"/>
        <end position="200"/>
    </location>
</feature>
<feature type="region of interest" description="Disordered" evidence="3">
    <location>
        <begin position="1"/>
        <end position="57"/>
    </location>
</feature>
<feature type="region of interest" description="Disordered" evidence="3">
    <location>
        <begin position="107"/>
        <end position="126"/>
    </location>
</feature>
<feature type="region of interest" description="Disordered" evidence="3">
    <location>
        <begin position="235"/>
        <end position="268"/>
    </location>
</feature>
<feature type="coiled-coil region" evidence="1">
    <location>
        <begin position="63"/>
        <end position="92"/>
    </location>
</feature>
<feature type="compositionally biased region" description="Basic and acidic residues" evidence="3">
    <location>
        <begin position="1"/>
        <end position="15"/>
    </location>
</feature>
<feature type="compositionally biased region" description="Low complexity" evidence="3">
    <location>
        <begin position="30"/>
        <end position="49"/>
    </location>
</feature>
<feature type="compositionally biased region" description="Low complexity" evidence="3">
    <location>
        <begin position="252"/>
        <end position="268"/>
    </location>
</feature>
<dbReference type="EMBL" id="BX284602">
    <property type="protein sequence ID" value="CAB04229.1"/>
    <property type="molecule type" value="Genomic_DNA"/>
</dbReference>
<dbReference type="PIR" id="T21620">
    <property type="entry name" value="T21620"/>
</dbReference>
<dbReference type="RefSeq" id="NP_496795.1">
    <property type="nucleotide sequence ID" value="NM_064394.4"/>
</dbReference>
<dbReference type="DIP" id="DIP-25142N"/>
<dbReference type="FunCoup" id="Q9XV46">
    <property type="interactions" value="49"/>
</dbReference>
<dbReference type="IntAct" id="Q9XV46">
    <property type="interactions" value="22"/>
</dbReference>
<dbReference type="STRING" id="6239.F32A11.6.1"/>
<dbReference type="PaxDb" id="6239-F32A11.6"/>
<dbReference type="PeptideAtlas" id="Q9XV46"/>
<dbReference type="EnsemblMetazoa" id="F32A11.6.1">
    <property type="protein sequence ID" value="F32A11.6.1"/>
    <property type="gene ID" value="WBGene00003388"/>
</dbReference>
<dbReference type="GeneID" id="174960"/>
<dbReference type="KEGG" id="cel:CELE_F32A11.6"/>
<dbReference type="UCSC" id="F32A11.6">
    <property type="organism name" value="c. elegans"/>
</dbReference>
<dbReference type="AGR" id="WB:WBGene00003388"/>
<dbReference type="CTD" id="174960"/>
<dbReference type="WormBase" id="F32A11.6">
    <property type="protein sequence ID" value="CE18657"/>
    <property type="gene ID" value="WBGene00003388"/>
    <property type="gene designation" value="moe-3"/>
</dbReference>
<dbReference type="eggNOG" id="KOG1677">
    <property type="taxonomic scope" value="Eukaryota"/>
</dbReference>
<dbReference type="GeneTree" id="ENSGT00970000196212"/>
<dbReference type="HOGENOM" id="CLU_062303_0_0_1"/>
<dbReference type="InParanoid" id="Q9XV46"/>
<dbReference type="OMA" id="HMETQIM"/>
<dbReference type="OrthoDB" id="410307at2759"/>
<dbReference type="PhylomeDB" id="Q9XV46"/>
<dbReference type="Reactome" id="R-CEL-450385">
    <property type="pathway name" value="Butyrate Response Factor 1 (BRF1) binds and destabilizes mRNA"/>
</dbReference>
<dbReference type="Reactome" id="R-CEL-450513">
    <property type="pathway name" value="Tristetraprolin (TTP, ZFP36) binds and destabilizes mRNA"/>
</dbReference>
<dbReference type="PRO" id="PR:Q9XV46"/>
<dbReference type="Proteomes" id="UP000001940">
    <property type="component" value="Chromosome II"/>
</dbReference>
<dbReference type="Bgee" id="WBGene00003388">
    <property type="expression patterns" value="Expressed in larva and 3 other cell types or tissues"/>
</dbReference>
<dbReference type="GO" id="GO:0005829">
    <property type="term" value="C:cytosol"/>
    <property type="evidence" value="ECO:0000318"/>
    <property type="project" value="GO_Central"/>
</dbReference>
<dbReference type="GO" id="GO:0043186">
    <property type="term" value="C:P granule"/>
    <property type="evidence" value="ECO:0007669"/>
    <property type="project" value="UniProtKB-ARBA"/>
</dbReference>
<dbReference type="GO" id="GO:0003730">
    <property type="term" value="F:mRNA 3'-UTR binding"/>
    <property type="evidence" value="ECO:0000318"/>
    <property type="project" value="GO_Central"/>
</dbReference>
<dbReference type="GO" id="GO:0008270">
    <property type="term" value="F:zinc ion binding"/>
    <property type="evidence" value="ECO:0007669"/>
    <property type="project" value="UniProtKB-KW"/>
</dbReference>
<dbReference type="FunFam" id="4.10.1000.10:FF:000001">
    <property type="entry name" value="zinc finger CCCH domain-containing protein 15-like"/>
    <property type="match status" value="1"/>
</dbReference>
<dbReference type="FunFam" id="4.10.1000.10:FF:000018">
    <property type="entry name" value="Zinc finger protein"/>
    <property type="match status" value="1"/>
</dbReference>
<dbReference type="Gene3D" id="4.10.1000.10">
    <property type="entry name" value="Zinc finger, CCCH-type"/>
    <property type="match status" value="2"/>
</dbReference>
<dbReference type="InterPro" id="IPR045877">
    <property type="entry name" value="ZFP36-like"/>
</dbReference>
<dbReference type="InterPro" id="IPR000571">
    <property type="entry name" value="Znf_CCCH"/>
</dbReference>
<dbReference type="InterPro" id="IPR036855">
    <property type="entry name" value="Znf_CCCH_sf"/>
</dbReference>
<dbReference type="PANTHER" id="PTHR12547">
    <property type="entry name" value="CCCH ZINC FINGER/TIS11-RELATED"/>
    <property type="match status" value="1"/>
</dbReference>
<dbReference type="PANTHER" id="PTHR12547:SF71">
    <property type="entry name" value="CCCH-TYPE ZINC FINGER PROTEIN MOE-3-RELATED"/>
    <property type="match status" value="1"/>
</dbReference>
<dbReference type="Pfam" id="PF00642">
    <property type="entry name" value="zf-CCCH"/>
    <property type="match status" value="2"/>
</dbReference>
<dbReference type="SMART" id="SM00356">
    <property type="entry name" value="ZnF_C3H1"/>
    <property type="match status" value="2"/>
</dbReference>
<dbReference type="SUPFAM" id="SSF90229">
    <property type="entry name" value="CCCH zinc finger"/>
    <property type="match status" value="2"/>
</dbReference>
<dbReference type="PROSITE" id="PS50103">
    <property type="entry name" value="ZF_C3H1"/>
    <property type="match status" value="2"/>
</dbReference>
<keyword id="KW-0175">Coiled coil</keyword>
<keyword id="KW-0479">Metal-binding</keyword>
<keyword id="KW-1185">Reference proteome</keyword>
<keyword id="KW-0677">Repeat</keyword>
<keyword id="KW-0862">Zinc</keyword>
<keyword id="KW-0863">Zinc-finger</keyword>
<reference evidence="7" key="1">
    <citation type="journal article" date="1998" name="Science">
        <title>Genome sequence of the nematode C. elegans: a platform for investigating biology.</title>
        <authorList>
            <consortium name="The C. elegans sequencing consortium"/>
        </authorList>
    </citation>
    <scope>NUCLEOTIDE SEQUENCE [LARGE SCALE GENOMIC DNA]</scope>
    <source>
        <strain evidence="7">Bristol N2</strain>
    </source>
</reference>
<reference evidence="6" key="2">
    <citation type="journal article" date="2002" name="Genes Cells">
        <title>Novel family of CCCH-type zinc-finger proteins, MOE-1, -2 and -3, participates in C. elegans oocyte maturation.</title>
        <authorList>
            <person name="Shimada M."/>
            <person name="Kawahara H."/>
            <person name="Doi H."/>
        </authorList>
    </citation>
    <scope>FUNCTION</scope>
    <scope>TISSUE SPECIFICITY</scope>
    <scope>DISRUPTION PHENOTYPE</scope>
</reference>
<accession>Q9XV46</accession>
<protein>
    <recommendedName>
        <fullName evidence="6">CCCH-type zinc finger protein moe-3</fullName>
    </recommendedName>
    <alternativeName>
        <fullName evidence="5">Maturation oocyte expansion protein 3</fullName>
    </alternativeName>
</protein>
<comment type="function">
    <text evidence="4">Zinc-finger protein that may play a role in oocyte maturation and fertility.</text>
</comment>
<comment type="tissue specificity">
    <text evidence="4">Exclusively expressed in the hermaphrodite gonad. Weakly distributed throughout gonadal oocytes from the mitotic stage to the developing diakinesis stage, with expression restricted to the distal region of the gonad.</text>
</comment>
<comment type="disruption phenotype">
    <text evidence="4">In adult hermaphrodites, double RNAi-mediated knockdown with oma-1 results in a 20% reduction in number of eggs laid. Triple RNAi-mediated knockdown with oma-1 and oma-2 results in a 85% reduction in number of eggs laid.</text>
</comment>
<proteinExistence type="evidence at transcript level"/>
<gene>
    <name evidence="5 8" type="primary">moe-3</name>
    <name evidence="8" type="ORF">F32A11.6</name>
</gene>
<evidence type="ECO:0000255" key="1"/>
<evidence type="ECO:0000255" key="2">
    <source>
        <dbReference type="PROSITE-ProRule" id="PRU00723"/>
    </source>
</evidence>
<evidence type="ECO:0000256" key="3">
    <source>
        <dbReference type="SAM" id="MobiDB-lite"/>
    </source>
</evidence>
<evidence type="ECO:0000269" key="4">
    <source>
    </source>
</evidence>
<evidence type="ECO:0000303" key="5">
    <source>
    </source>
</evidence>
<evidence type="ECO:0000305" key="6"/>
<evidence type="ECO:0000312" key="7">
    <source>
        <dbReference type="Proteomes" id="UP000001940"/>
    </source>
</evidence>
<evidence type="ECO:0000312" key="8">
    <source>
        <dbReference type="WormBase" id="F32A11.6"/>
    </source>
</evidence>
<name>MOE3_CAEEL</name>
<sequence>MSKVKGDLEKSDKRPPSSMSTGSADSGVFSSGVHASSPSHSQGSSSQSGPPSPTTQLNSLLFETANLIAVNEQLRKEIAENKQIQTNQMRALRYSSNPVDQPFVANSISPHHGFPQRPPRGERRMQKPESYKTVICQAWLESKTCTFAENCRFAHGEEELRPAKLESRQNNKYKTKLCDKYTTTGLCPYGKRCLFIHPDNQPNAYIRADKLYEVSQRHALADLRDHVESQIMTGNTRNSYNQQPPPMGGLEMQSSPMKSSSDSSHMRSPMAQMNCETTRPHPSWPLESSSFFLPPEMSSINNNNLMSPFETPFPNGSTGIQPHFVTAKRRAAFPPVPSNFQQDDDNMSSIPGFDHLAEDMAKHLELW</sequence>